<organism>
    <name type="scientific">Pan troglodytes</name>
    <name type="common">Chimpanzee</name>
    <dbReference type="NCBI Taxonomy" id="9598"/>
    <lineage>
        <taxon>Eukaryota</taxon>
        <taxon>Metazoa</taxon>
        <taxon>Chordata</taxon>
        <taxon>Craniata</taxon>
        <taxon>Vertebrata</taxon>
        <taxon>Euteleostomi</taxon>
        <taxon>Mammalia</taxon>
        <taxon>Eutheria</taxon>
        <taxon>Euarchontoglires</taxon>
        <taxon>Primates</taxon>
        <taxon>Haplorrhini</taxon>
        <taxon>Catarrhini</taxon>
        <taxon>Hominidae</taxon>
        <taxon>Pan</taxon>
    </lineage>
</organism>
<keyword id="KW-0009">Actin-binding</keyword>
<keyword id="KW-0131">Cell cycle</keyword>
<keyword id="KW-0965">Cell junction</keyword>
<keyword id="KW-1003">Cell membrane</keyword>
<keyword id="KW-0966">Cell projection</keyword>
<keyword id="KW-0175">Coiled coil</keyword>
<keyword id="KW-0963">Cytoplasm</keyword>
<keyword id="KW-0206">Cytoskeleton</keyword>
<keyword id="KW-0341">Growth regulation</keyword>
<keyword id="KW-0472">Membrane</keyword>
<keyword id="KW-0539">Nucleus</keyword>
<keyword id="KW-1185">Reference proteome</keyword>
<keyword id="KW-0346">Stress response</keyword>
<keyword id="KW-0770">Synapse</keyword>
<feature type="chain" id="PRO_0000296676" description="Actin-associated protein FAM107A">
    <location>
        <begin position="1"/>
        <end position="144"/>
    </location>
</feature>
<feature type="region of interest" description="Disordered" evidence="4">
    <location>
        <begin position="105"/>
        <end position="124"/>
    </location>
</feature>
<feature type="coiled-coil region" evidence="3">
    <location>
        <begin position="67"/>
        <end position="94"/>
    </location>
</feature>
<feature type="short sequence motif" description="Nuclear localization signal" evidence="1">
    <location>
        <begin position="74"/>
        <end position="84"/>
    </location>
</feature>
<feature type="compositionally biased region" description="Basic and acidic residues" evidence="4">
    <location>
        <begin position="112"/>
        <end position="124"/>
    </location>
</feature>
<protein>
    <recommendedName>
        <fullName evidence="5">Actin-associated protein FAM107A</fullName>
    </recommendedName>
</protein>
<dbReference type="EMBL" id="AB222122">
    <property type="protein sequence ID" value="BAF62367.1"/>
    <property type="molecule type" value="mRNA"/>
</dbReference>
<dbReference type="RefSeq" id="NP_001092044.1">
    <property type="nucleotide sequence ID" value="NM_001098574.1"/>
</dbReference>
<dbReference type="SMR" id="A5A6J4"/>
<dbReference type="STRING" id="9598.ENSPTRP00000073113"/>
<dbReference type="PaxDb" id="9598-ENSPTRP00000044578"/>
<dbReference type="GeneID" id="747580"/>
<dbReference type="CTD" id="11170"/>
<dbReference type="eggNOG" id="ENOG502RZJK">
    <property type="taxonomic scope" value="Eukaryota"/>
</dbReference>
<dbReference type="InParanoid" id="A5A6J4"/>
<dbReference type="Proteomes" id="UP000002277">
    <property type="component" value="Unplaced"/>
</dbReference>
<dbReference type="GO" id="GO:0005737">
    <property type="term" value="C:cytoplasm"/>
    <property type="evidence" value="ECO:0007669"/>
    <property type="project" value="UniProtKB-KW"/>
</dbReference>
<dbReference type="GO" id="GO:0005925">
    <property type="term" value="C:focal adhesion"/>
    <property type="evidence" value="ECO:0007669"/>
    <property type="project" value="UniProtKB-SubCell"/>
</dbReference>
<dbReference type="GO" id="GO:0043005">
    <property type="term" value="C:neuron projection"/>
    <property type="evidence" value="ECO:0000318"/>
    <property type="project" value="GO_Central"/>
</dbReference>
<dbReference type="GO" id="GO:0005634">
    <property type="term" value="C:nucleus"/>
    <property type="evidence" value="ECO:0007669"/>
    <property type="project" value="UniProtKB-SubCell"/>
</dbReference>
<dbReference type="GO" id="GO:0032587">
    <property type="term" value="C:ruffle membrane"/>
    <property type="evidence" value="ECO:0007669"/>
    <property type="project" value="UniProtKB-SubCell"/>
</dbReference>
<dbReference type="GO" id="GO:0001725">
    <property type="term" value="C:stress fiber"/>
    <property type="evidence" value="ECO:0000318"/>
    <property type="project" value="GO_Central"/>
</dbReference>
<dbReference type="GO" id="GO:0045202">
    <property type="term" value="C:synapse"/>
    <property type="evidence" value="ECO:0000318"/>
    <property type="project" value="GO_Central"/>
</dbReference>
<dbReference type="GO" id="GO:0003779">
    <property type="term" value="F:actin binding"/>
    <property type="evidence" value="ECO:0007669"/>
    <property type="project" value="UniProtKB-KW"/>
</dbReference>
<dbReference type="GO" id="GO:0051017">
    <property type="term" value="P:actin filament bundle assembly"/>
    <property type="evidence" value="ECO:0000318"/>
    <property type="project" value="GO_Central"/>
</dbReference>
<dbReference type="GO" id="GO:0030041">
    <property type="term" value="P:actin filament polymerization"/>
    <property type="evidence" value="ECO:0000318"/>
    <property type="project" value="GO_Central"/>
</dbReference>
<dbReference type="GO" id="GO:0032956">
    <property type="term" value="P:regulation of actin cytoskeleton organization"/>
    <property type="evidence" value="ECO:0000318"/>
    <property type="project" value="GO_Central"/>
</dbReference>
<dbReference type="InterPro" id="IPR009533">
    <property type="entry name" value="FAM107"/>
</dbReference>
<dbReference type="PANTHER" id="PTHR16768:SF3">
    <property type="entry name" value="ACTIN-ASSOCIATED PROTEIN FAM107A"/>
    <property type="match status" value="1"/>
</dbReference>
<dbReference type="PANTHER" id="PTHR16768">
    <property type="entry name" value="DOWN REGULATED IN RENAL CARCINOMA 1/TU3A"/>
    <property type="match status" value="1"/>
</dbReference>
<dbReference type="Pfam" id="PF06625">
    <property type="entry name" value="DUF1151"/>
    <property type="match status" value="1"/>
</dbReference>
<evidence type="ECO:0000250" key="1">
    <source>
        <dbReference type="UniProtKB" id="O95990"/>
    </source>
</evidence>
<evidence type="ECO:0000250" key="2">
    <source>
        <dbReference type="UniProtKB" id="Q78TU8"/>
    </source>
</evidence>
<evidence type="ECO:0000255" key="3"/>
<evidence type="ECO:0000256" key="4">
    <source>
        <dbReference type="SAM" id="MobiDB-lite"/>
    </source>
</evidence>
<evidence type="ECO:0000305" key="5"/>
<reference key="1">
    <citation type="journal article" date="2007" name="Gene">
        <title>Mapping of chimpanzee full-length cDNAs onto the human genome unveils large potential divergence of the transcriptome.</title>
        <authorList>
            <person name="Sakate R."/>
            <person name="Suto Y."/>
            <person name="Imanishi T."/>
            <person name="Tanoue T."/>
            <person name="Hida M."/>
            <person name="Hayasaka I."/>
            <person name="Kusuda J."/>
            <person name="Gojobori T."/>
            <person name="Hashimoto K."/>
            <person name="Hirai M."/>
        </authorList>
    </citation>
    <scope>NUCLEOTIDE SEQUENCE [MRNA]</scope>
    <source>
        <tissue>Brain</tissue>
    </source>
</reference>
<proteinExistence type="evidence at transcript level"/>
<name>F107A_PANTR</name>
<comment type="function">
    <text evidence="1 2">Stress-inducible actin-binding protein that plays a role in synaptic and cognitive functions by modulating actin filamentous (F-actin) dynamics. Mediates polymerization of globular actin to F-actin. Also binds to, stabilizes and bundles F-actin. Involved in synaptic function by regulating neurite outgrowth in an actin-dependent manner and for the acquisition of hippocampus-dependent cognitive function, such as learning and long-term memory (By similarity). Plays a role in the actin and microtubule cytoskeleton organization; negatively regulates focal adhesion (FA) assembly promoting malignant glial cell migration in an actin-, microtubule- and MAP1A-dependent manner. Also involved in neuroblastoma G1/S phase cell cycle progression and cell proliferation inhibition by stimulating ubiquitination of NF-kappa-B subunit RELA and NF-kappa-B degradation in a COMMD1- and actin-dependent manner. May play a role in tumor development (By similarity).</text>
</comment>
<comment type="subunit">
    <text evidence="1 2">Interacts with ACTB. Interacts with COMMD1; this interaction stabilizes COMMD1 in the nucleus. Interacts with MAP1A. Interacts with PRDX1 (By similarity). Interacts with F-actin (By similarity).</text>
</comment>
<comment type="subcellular location">
    <subcellularLocation>
        <location evidence="1">Nucleus</location>
    </subcellularLocation>
    <subcellularLocation>
        <location evidence="1">Cytoplasm</location>
        <location evidence="1">Cytoskeleton</location>
        <location evidence="1">Stress fiber</location>
    </subcellularLocation>
    <subcellularLocation>
        <location evidence="1">Cell junction</location>
        <location evidence="1">Focal adhesion</location>
    </subcellularLocation>
    <subcellularLocation>
        <location evidence="1">Cell projection</location>
        <location evidence="1">Ruffle membrane</location>
    </subcellularLocation>
    <subcellularLocation>
        <location evidence="2">Synapse</location>
    </subcellularLocation>
    <text evidence="1">Colocalizes with F-actin and COMMD1 in the nucleus. Colocalizes with MAP1A along actin stress fibers and membrane ruffles.</text>
</comment>
<comment type="similarity">
    <text evidence="5">Belongs to the FAM107 family.</text>
</comment>
<sequence length="144" mass="17383">MYSEIQRGRADIGGLMARPEYREWNPELIKPKKLLNPVKASRSHQELHRELLMNHRRGLGVDSKPELQRVLEHRRRNQLIKKKKEELEAKRLQCPFEQELLRRQQRLNQLEKPPEKEEDHAPEFIKVRENLRRIATLTSEEREL</sequence>
<accession>A5A6J4</accession>
<gene>
    <name type="primary">FAM107A</name>
</gene>